<gene>
    <name evidence="36" type="primary">AGT</name>
    <name type="synonym">SERPINA8</name>
</gene>
<accession>P01019</accession>
<accession>Q16358</accession>
<accession>Q16359</accession>
<accession>Q96F91</accession>
<organism>
    <name type="scientific">Homo sapiens</name>
    <name type="common">Human</name>
    <dbReference type="NCBI Taxonomy" id="9606"/>
    <lineage>
        <taxon>Eukaryota</taxon>
        <taxon>Metazoa</taxon>
        <taxon>Chordata</taxon>
        <taxon>Craniata</taxon>
        <taxon>Vertebrata</taxon>
        <taxon>Euteleostomi</taxon>
        <taxon>Mammalia</taxon>
        <taxon>Eutheria</taxon>
        <taxon>Euarchontoglires</taxon>
        <taxon>Primates</taxon>
        <taxon>Haplorrhini</taxon>
        <taxon>Catarrhini</taxon>
        <taxon>Hominidae</taxon>
        <taxon>Homo</taxon>
    </lineage>
</organism>
<reference key="1">
    <citation type="journal article" date="1984" name="Biochemistry">
        <title>Primary structure of human preangiotensinogen deduced from the cloned cDNA sequence.</title>
        <authorList>
            <person name="Kageyama R."/>
            <person name="Ohkubo H."/>
            <person name="Nakanishi S."/>
        </authorList>
    </citation>
    <scope>NUCLEOTIDE SEQUENCE [MRNA]</scope>
</reference>
<reference key="2">
    <citation type="journal article" date="1989" name="DNA">
        <title>Structure of human angiotensinogen gene.</title>
        <authorList>
            <person name="Gaillard I."/>
            <person name="Clauser E."/>
            <person name="Corvol P."/>
        </authorList>
    </citation>
    <scope>NUCLEOTIDE SEQUENCE [GENOMIC DNA]</scope>
</reference>
<reference key="3">
    <citation type="journal article" date="1990" name="J. Biol. Chem.">
        <title>Structure and expression of the human angiotensinogen gene. Identification of a unique and highly active promoter.</title>
        <authorList>
            <person name="Fukamizu A."/>
            <person name="Takahashi S."/>
            <person name="Seo M.S."/>
            <person name="Tada M."/>
            <person name="Tanimoto K."/>
            <person name="Uehara S."/>
            <person name="Murakami K."/>
        </authorList>
    </citation>
    <scope>NUCLEOTIDE SEQUENCE [GENOMIC DNA]</scope>
    <scope>TISSUE SPECIFICITY</scope>
</reference>
<reference key="4">
    <citation type="journal article" date="2004" name="Genome Res.">
        <title>The status, quality, and expansion of the NIH full-length cDNA project: the Mammalian Gene Collection (MGC).</title>
        <authorList>
            <consortium name="The MGC Project Team"/>
        </authorList>
    </citation>
    <scope>NUCLEOTIDE SEQUENCE [LARGE SCALE MRNA]</scope>
    <scope>VARIANT SER-326</scope>
    <source>
        <tissue>Brain</tissue>
    </source>
</reference>
<reference key="5">
    <citation type="journal article" date="1987" name="Circ. Res.">
        <title>Molecular cloning of human angiotensinogen cDNA and evidence for the presence of its mRNA in rat heart.</title>
        <authorList>
            <person name="Kunapuli S.P."/>
            <person name="Kumar A."/>
        </authorList>
    </citation>
    <scope>NUCLEOTIDE SEQUENCE [MRNA] OF 1-329</scope>
</reference>
<reference key="6">
    <citation type="journal article" date="1987" name="Arch. Biochem. Biophys.">
        <title>Tissue specific hormonal regulation of the rat angiotensinogen gene expression.</title>
        <authorList>
            <person name="Kunapuli S.P."/>
            <person name="Benedict C.R."/>
            <person name="Kumar A."/>
        </authorList>
    </citation>
    <scope>NUCLEOTIDE SEQUENCE [MRNA] OF 23-175</scope>
</reference>
<reference key="7">
    <citation type="journal article" date="1995" name="Hum. Genet.">
        <title>Detection and characterization of new mutations in the human angiotensinogen gene (AGT).</title>
        <authorList>
            <person name="Hixson J.E."/>
            <person name="Powers P.K."/>
        </authorList>
    </citation>
    <scope>PARTIAL NUCLEOTIDE SEQUENCE [GENOMIC DNA]</scope>
    <scope>VARIANTS ILE-233; ARG-235 AND CYS-272</scope>
</reference>
<reference key="8">
    <citation type="journal article" date="1981" name="Biochem. Biophys. Res. Commun.">
        <title>The amino terminal amino acid sequence of human angiotensinogen.</title>
        <authorList>
            <person name="Tewksbury D.A."/>
            <person name="Dart R.A."/>
            <person name="Travis J."/>
        </authorList>
    </citation>
    <scope>PROTEIN SEQUENCE OF 25-49</scope>
</reference>
<reference key="9">
    <citation type="journal article" date="1995" name="J. Biol. Chem.">
        <title>Identification of angiotensinogen and complement C3dg as novel proteins binding the proform of eosinophil major basic protein in human pregnancy serum and plasma.</title>
        <authorList>
            <person name="Oxvig C."/>
            <person name="Haaning J."/>
            <person name="Kristensen L."/>
            <person name="Wagner J.M."/>
            <person name="Rubin I."/>
            <person name="Stigbrand T."/>
            <person name="Gleich G.J."/>
            <person name="Sottrup-Jensen L."/>
        </authorList>
    </citation>
    <scope>PROTEIN SEQUENCE OF 25-36</scope>
    <scope>SUBUNIT</scope>
    <source>
        <tissue>Serum</tissue>
    </source>
</reference>
<reference key="10">
    <citation type="journal article" date="1968" name="Biochim. Biophys. Acta">
        <title>Enzymatic degradation and electrophoresis of human angiotensin I.</title>
        <authorList>
            <person name="Arakawa K."/>
            <person name="Minohara A."/>
            <person name="Yamada J."/>
            <person name="Nakamura M."/>
        </authorList>
    </citation>
    <scope>PROTEIN SEQUENCE OF 25-34</scope>
</reference>
<reference key="11">
    <citation type="journal article" date="1970" name="Biochim. Biophys. Acta">
        <title>A dipeptidyl carboxypeptidase that converts angiotensin I and inactivates bradykinin.</title>
        <authorList>
            <person name="Yang H.Y."/>
            <person name="Erdoes E.G."/>
            <person name="Levin Y."/>
        </authorList>
    </citation>
    <scope>CLEAVAGE</scope>
</reference>
<reference key="12">
    <citation type="journal article" date="1985" name="Mol. Cell. Endocrinol.">
        <title>Processing of rat and human angiotensinogen precursors by microsomal membranes.</title>
        <authorList>
            <person name="Campbell D.J."/>
            <person name="Bouhnik J."/>
            <person name="Coezy E."/>
            <person name="Menard J."/>
            <person name="Corvol P."/>
        </authorList>
    </citation>
    <scope>GLYCOSYLATION AT ASN-38; ASN-161; ASN-295 AND ASN-319</scope>
</reference>
<reference key="13">
    <citation type="journal article" date="1975" name="Circ. Res.">
        <title>Angiotensin III: (DES-Aspartic Acid-1)-Angiotensin II. Evidence and speculation for its role as an important agonist in the renin - angiotensin system.</title>
        <authorList>
            <person name="Goodfriend T.L."/>
            <person name="Peach M.J."/>
        </authorList>
    </citation>
    <scope>FUNCTION OF ANGIOTENSIN-3</scope>
</reference>
<reference key="14">
    <citation type="journal article" date="1992" name="Biochem. Biophys. Res. Commun.">
        <title>Cloning and characterization of a human angiotensin II type 1 receptor.</title>
        <authorList>
            <person name="Bergsma D.J."/>
            <person name="Ellis C."/>
            <person name="Kumar C."/>
            <person name="Nuthalaganti P."/>
            <person name="Kersten H."/>
            <person name="Elshourbagy N.A."/>
            <person name="Griffin E."/>
            <person name="Stadel J.M."/>
            <person name="Aiyar N."/>
        </authorList>
    </citation>
    <scope>FUNCTION OF ANGIOTENSIN-2</scope>
</reference>
<reference key="15">
    <citation type="journal article" date="1994" name="Biochem. Biophys. Res. Commun.">
        <title>Molecular cloning and expression of the gene encoding human angiotensin II type 2 receptor.</title>
        <authorList>
            <person name="Tsuzuki S."/>
            <person name="Ichiki T."/>
            <person name="Nakakubo H."/>
            <person name="Kitami Y."/>
            <person name="Guo D.F."/>
            <person name="Shirai H."/>
            <person name="Inagami T."/>
        </authorList>
    </citation>
    <scope>FUNCTION OF ANGIOTENSIN-2</scope>
</reference>
<reference key="16">
    <citation type="journal article" date="1999" name="Am. J. Hypertens.">
        <title>The renin-angiotensin-aldosterone system: a specific target for hypertension management.</title>
        <authorList>
            <person name="Weir M.R."/>
            <person name="Dzau V.J."/>
        </authorList>
    </citation>
    <scope>FUNCTION OF ANGIOTENSIN-2</scope>
</reference>
<reference key="17">
    <citation type="journal article" date="2000" name="Circ. Res.">
        <title>A novel angiotensin-converting enzyme-related carboxypeptidase (ACE2) converts angiotensin I to angiotensin 1-9.</title>
        <authorList>
            <person name="Donoghue M."/>
            <person name="Hsieh F."/>
            <person name="Baronas E."/>
            <person name="Godbout K."/>
            <person name="Gosselin M."/>
            <person name="Stagliano N."/>
            <person name="Donovan M."/>
            <person name="Woolf B."/>
            <person name="Robison K."/>
            <person name="Jeyaseelan R."/>
            <person name="Breitbart R.E."/>
            <person name="Acton S."/>
        </authorList>
    </citation>
    <scope>CLEAVAGE BY ACE AND ACE2</scope>
</reference>
<reference key="18">
    <citation type="journal article" date="2002" name="J. Biol. Chem.">
        <title>Hydrolysis of biological peptides by human angiotensin-converting enzyme-related carboxypeptidase.</title>
        <authorList>
            <person name="Vickers C."/>
            <person name="Hales P."/>
            <person name="Kaushik V."/>
            <person name="Dick L."/>
            <person name="Gavin J."/>
            <person name="Tang J."/>
            <person name="Godbout K."/>
            <person name="Parsons T."/>
            <person name="Baronas E."/>
            <person name="Hsieh F."/>
            <person name="Acton S."/>
            <person name="Patane M.A."/>
            <person name="Nichols A."/>
            <person name="Tummino P."/>
        </authorList>
    </citation>
    <scope>CLEAVAGE OF ANGIOTENSIN-1 AND ANGIOTENSIN-2 BY ACE2</scope>
</reference>
<reference key="19">
    <citation type="journal article" date="2002" name="J. Clin. Invest.">
        <title>Pivotal role of the renin/prorenin receptor in angiotensin II production and cellular responses to renin.</title>
        <authorList>
            <person name="Nguyen G."/>
            <person name="Delarue F."/>
            <person name="Burckle C."/>
            <person name="Bouzhir L."/>
            <person name="Giller T."/>
            <person name="Sraer J.-D."/>
        </authorList>
    </citation>
    <scope>CLEAVAGE BY RENIN</scope>
</reference>
<reference key="20">
    <citation type="journal article" date="2004" name="Biochem. J.">
        <title>Evaluation of angiotensin-converting enzyme (ACE), its homologue ACE2 and neprilysin in angiotensin peptide metabolism.</title>
        <authorList>
            <person name="Rice G.I."/>
            <person name="Thomas D.A."/>
            <person name="Grant P.J."/>
            <person name="Turner A.J."/>
            <person name="Hooper N.M."/>
        </authorList>
    </citation>
    <scope>CLEAVAGE</scope>
</reference>
<reference key="21">
    <citation type="journal article" date="2005" name="J. Proteome Res.">
        <title>Human plasma N-glycoproteome analysis by immunoaffinity subtraction, hydrazide chemistry, and mass spectrometry.</title>
        <authorList>
            <person name="Liu T."/>
            <person name="Qian W.-J."/>
            <person name="Gritsenko M.A."/>
            <person name="Camp D.G. II"/>
            <person name="Monroe M.E."/>
            <person name="Moore R.J."/>
            <person name="Smith R.D."/>
        </authorList>
    </citation>
    <scope>GLYCOSYLATION [LARGE SCALE ANALYSIS] AT ASN-38</scope>
    <source>
        <tissue>Plasma</tissue>
    </source>
</reference>
<reference key="22">
    <citation type="journal article" date="2007" name="Arterioscler. Thromb. Vasc. Biol.">
        <title>Mass-spectrometric identification of a novel angiotensin peptide in human plasma.</title>
        <authorList>
            <person name="Jankowski V."/>
            <person name="Vanholder R."/>
            <person name="van der Giet M."/>
            <person name="Tolle M."/>
            <person name="Karadogan S."/>
            <person name="Gobom J."/>
            <person name="Furkert J."/>
            <person name="Oksche A."/>
            <person name="Krause E."/>
            <person name="Tran T.N."/>
            <person name="Tepel M."/>
            <person name="Schuchardt M."/>
            <person name="Schluter H."/>
            <person name="Wiedon A."/>
            <person name="Beyermann M."/>
            <person name="Bader M."/>
            <person name="Todiras M."/>
            <person name="Zidek W."/>
            <person name="Jankowski J."/>
        </authorList>
    </citation>
    <scope>DECARBOXYLATION AT ASP-25</scope>
    <scope>FUNCTION</scope>
    <scope>IDENTIFICATION BY MASS SPECTROMETRY</scope>
</reference>
<reference key="23">
    <citation type="journal article" date="2008" name="J. Intern. Med.">
        <title>Renin-angiotensin system revisited.</title>
        <authorList>
            <person name="Fyhrquist F."/>
            <person name="Saijonmaa O."/>
        </authorList>
    </citation>
    <scope>REVIEW ON THE RENIN-ANGIOTENSIN SYSTEM</scope>
</reference>
<reference key="24">
    <citation type="journal article" date="2009" name="J. Proteome Res.">
        <title>Glycoproteomics analysis of human liver tissue by combination of multiple enzyme digestion and hydrazide chemistry.</title>
        <authorList>
            <person name="Chen R."/>
            <person name="Jiang X."/>
            <person name="Sun D."/>
            <person name="Han G."/>
            <person name="Wang F."/>
            <person name="Ye M."/>
            <person name="Wang L."/>
            <person name="Zou H."/>
        </authorList>
    </citation>
    <scope>GLYCOSYLATION [LARGE SCALE ANALYSIS] AT ASN-38</scope>
    <source>
        <tissue>Liver</tissue>
    </source>
</reference>
<reference key="25">
    <citation type="journal article" date="2011" name="BMC Syst. Biol.">
        <title>Initial characterization of the human central proteome.</title>
        <authorList>
            <person name="Burkard T.R."/>
            <person name="Planyavsky M."/>
            <person name="Kaupe I."/>
            <person name="Breitwieser F.P."/>
            <person name="Buerckstuemmer T."/>
            <person name="Bennett K.L."/>
            <person name="Superti-Furga G."/>
            <person name="Colinge J."/>
        </authorList>
    </citation>
    <scope>IDENTIFICATION BY MASS SPECTROMETRY [LARGE SCALE ANALYSIS]</scope>
</reference>
<reference key="26">
    <citation type="journal article" date="2014" name="J. Proteomics">
        <title>An enzyme assisted RP-RPLC approach for in-depth analysis of human liver phosphoproteome.</title>
        <authorList>
            <person name="Bian Y."/>
            <person name="Song C."/>
            <person name="Cheng K."/>
            <person name="Dong M."/>
            <person name="Wang F."/>
            <person name="Huang J."/>
            <person name="Sun D."/>
            <person name="Wang L."/>
            <person name="Ye M."/>
            <person name="Zou H."/>
        </authorList>
    </citation>
    <scope>IDENTIFICATION BY MASS SPECTROMETRY [LARGE SCALE ANALYSIS]</scope>
    <source>
        <tissue>Liver</tissue>
    </source>
</reference>
<reference key="27">
    <citation type="journal article" date="1998" name="Eur. J. Biochem.">
        <title>The octapeptide angiotensin II adopts a well-defined structure in a phospholipid environment.</title>
        <authorList>
            <person name="Carpenter K.A."/>
            <person name="Wilkes B.C."/>
            <person name="Schiller P.W."/>
        </authorList>
    </citation>
    <scope>STRUCTURE BY NMR OF ANGIOTENSIN-2</scope>
</reference>
<reference evidence="37 38" key="28">
    <citation type="journal article" date="2003" name="Eur. J. Biochem.">
        <title>Comparison of the solution structures of angiotensin I &amp; II. Implication for structure-function relationship.</title>
        <authorList>
            <person name="Spyroulias G.A."/>
            <person name="Nikolakopoulou P."/>
            <person name="Tzakos A."/>
            <person name="Gerothanassis I.P."/>
            <person name="Magafa V."/>
            <person name="Manessi-Zoupa E."/>
            <person name="Cordopatis P."/>
        </authorList>
    </citation>
    <scope>STRUCTURE BY NMR OF 25-34</scope>
    <scope>STRUCTURE BY NMR OF 25-32</scope>
</reference>
<reference evidence="39 40" key="29">
    <citation type="journal article" date="2010" name="Nature">
        <title>A redox switch in angiotensinogen modulates angiotensin release.</title>
        <authorList>
            <person name="Zhou A."/>
            <person name="Carrell R.W."/>
            <person name="Murphy M.P."/>
            <person name="Wei Z."/>
            <person name="Yan Y."/>
            <person name="Stanley P.L."/>
            <person name="Stein P.E."/>
            <person name="Broughton Pipkin F."/>
            <person name="Read R.J."/>
        </authorList>
    </citation>
    <scope>X-RAY CRYSTALLOGRAPHY (4.33 ANGSTROMS) OF 25-476 IN COMPLEX WITH RENIN</scope>
    <scope>DISULFIDE BOND</scope>
</reference>
<reference key="30">
    <citation type="journal article" date="1992" name="Cell">
        <title>Molecular basis of human hypertension: role of angiotensinogen.</title>
        <authorList>
            <person name="Jeunemaitre X."/>
            <person name="Soubrier F."/>
            <person name="Kotelevtsev Y.V."/>
            <person name="Lifton R.P."/>
            <person name="Williams C.S."/>
            <person name="Charru A."/>
            <person name="Hunt S.C."/>
            <person name="Hopkins P.N."/>
            <person name="Williams R.R."/>
            <person name="Lalouel J.-M."/>
            <person name="Corvol P."/>
        </authorList>
    </citation>
    <scope>VARIANTS MET-198; THR-259 AND CYS-272</scope>
</reference>
<reference key="31">
    <citation type="journal article" date="1993" name="Nat. Genet.">
        <title>A molecular variant of angiotensinogen associated with preeclampsia.</title>
        <authorList>
            <person name="Ward K."/>
            <person name="Hata A."/>
            <person name="Jeunemaitre X."/>
            <person name="Helin C."/>
            <person name="Nelson L."/>
            <person name="Namikawa C."/>
            <person name="Farrington P.F."/>
            <person name="Ogasawara M."/>
            <person name="Suzumori K."/>
            <person name="Tomoda S."/>
            <person name="Berrebi S."/>
            <person name="Sasaki M."/>
            <person name="Corvol P."/>
            <person name="Lifton R.P."/>
            <person name="Lalouel J.-M."/>
        </authorList>
    </citation>
    <scope>VARIANT THR-259</scope>
</reference>
<reference key="32">
    <citation type="journal article" date="1995" name="J. Biol. Chem.">
        <title>A mutation of angiotensinogen in a patient with preeclampsia leads to altered kinetics of the renin-angiotensin system.</title>
        <authorList>
            <person name="Inoue I."/>
            <person name="Rohrwasser A."/>
            <person name="Helin C."/>
            <person name="Jeunemaitre X."/>
            <person name="Crain P."/>
            <person name="Bohlender J."/>
            <person name="Lifton R.P."/>
            <person name="Corvol P."/>
            <person name="Ward K."/>
            <person name="Lalouel J.-M."/>
        </authorList>
    </citation>
    <scope>VARIANT PHE-34</scope>
</reference>
<reference key="33">
    <citation type="journal article" date="1996" name="J. Biol. Chem.">
        <title>The natural mutation Y248C of human angiotensinogen leads to abnormal glycosylation and altered immunological recognition of the protein.</title>
        <authorList>
            <person name="Gimenez-Roqueplo A.P."/>
            <person name="Leconte I."/>
            <person name="Cohen P."/>
            <person name="Simon D."/>
            <person name="Guyene T.T."/>
            <person name="Celerier J."/>
            <person name="Pau B."/>
            <person name="Corvol P."/>
            <person name="Clauser E."/>
            <person name="Jeunemaitre X."/>
        </authorList>
    </citation>
    <scope>CHARACTERIZATION OF VARIANT CYS-272</scope>
</reference>
<reference key="34">
    <citation type="journal article" date="2005" name="Nat. Genet.">
        <title>Mutations in genes in the renin-angiotensin system are associated with autosomal recessive renal tubular dysgenesis.</title>
        <authorList>
            <person name="Gribouval O."/>
            <person name="Gonzales M."/>
            <person name="Neuhaus T."/>
            <person name="Aziza J."/>
            <person name="Bieth E."/>
            <person name="Laurent N."/>
            <person name="Bouton J.M."/>
            <person name="Feuillet F."/>
            <person name="Makni S."/>
            <person name="Ben Amar H."/>
            <person name="Laube G."/>
            <person name="Delezoide A.-L."/>
            <person name="Bouvier R."/>
            <person name="Dijoud F."/>
            <person name="Ollagnon-Roman E."/>
            <person name="Roume J."/>
            <person name="Joubert M."/>
            <person name="Antignac C."/>
            <person name="Gubler M.-C."/>
        </authorList>
    </citation>
    <scope>VARIANT RTD GLN-366</scope>
</reference>
<comment type="function">
    <text evidence="3 5 15">Essential component of the renin-angiotensin system (RAS), a potent regulator of blood pressure, body fluid and electrolyte homeostasis.</text>
</comment>
<comment type="function">
    <molecule>Angiotensin-2</molecule>
    <text evidence="1 3 11 15">Acts directly on vascular smooth muscle as a potent vasoconstrictor, affects cardiac contractility and heart rate through its action on the sympathetic nervous system, and alters renal sodium and water absorption through its ability to stimulate the zona glomerulosa cells of the adrenal cortex to synthesize and secrete aldosterone (PubMed:10619573, PubMed:17138938). Acts by binding to angiotensin receptors AGTR1 and AGTR2 (PubMed:1567413). Also binds the DEAR/FBXW7-AS1 receptor (By similarity).</text>
</comment>
<comment type="function">
    <molecule>Angiotensin-3</molecule>
    <text evidence="5">Stimulates aldosterone release.</text>
</comment>
<comment type="function">
    <molecule>Angiotensin 1-7</molecule>
    <text evidence="2">Is a ligand for the G-protein coupled receptor MAS1 (By similarity). Has vasodilator and antidiuretic effects. Has an antithrombotic effect that involves MAS1-mediated release of nitric oxide from platelets (By similarity).</text>
</comment>
<comment type="subunit">
    <text evidence="17 22">During pregnancy, exists as a disulfide-linked 2:2 heterotetramer with the proform of PRG2 and as a complex (probably a 2:2:2 heterohexamer) with pro-PRG2 and C3dg.</text>
</comment>
<comment type="interaction">
    <interactant intactId="EBI-751728">
        <id>P01019</id>
    </interactant>
    <interactant intactId="EBI-2340132">
        <id>Q9UI10</id>
        <label>EIF2B4</label>
    </interactant>
    <organismsDiffer>false</organismsDiffer>
    <experiments>3</experiments>
</comment>
<comment type="interaction">
    <interactant intactId="EBI-751728">
        <id>P01019</id>
    </interactant>
    <interactant intactId="EBI-744871">
        <id>O00746</id>
        <label>NME4</label>
    </interactant>
    <organismsDiffer>false</organismsDiffer>
    <experiments>3</experiments>
</comment>
<comment type="interaction">
    <interactant intactId="EBI-751728">
        <id>P01019</id>
    </interactant>
    <interactant intactId="EBI-25830675">
        <id>C9J082</id>
        <label>NPHP1</label>
    </interactant>
    <organismsDiffer>false</organismsDiffer>
    <experiments>3</experiments>
</comment>
<comment type="interaction">
    <interactant intactId="EBI-751728">
        <id>P01019</id>
    </interactant>
    <interactant intactId="EBI-351098">
        <id>O14744</id>
        <label>PRMT5</label>
    </interactant>
    <organismsDiffer>false</organismsDiffer>
    <experiments>3</experiments>
</comment>
<comment type="interaction">
    <interactant intactId="EBI-751728">
        <id>P01019</id>
    </interactant>
    <interactant intactId="EBI-10272071">
        <id>Q8TAS3</id>
        <label>PRRG2</label>
    </interactant>
    <organismsDiffer>false</organismsDiffer>
    <experiments>3</experiments>
</comment>
<comment type="interaction">
    <interactant intactId="EBI-751728">
        <id>P01019</id>
    </interactant>
    <interactant intactId="EBI-715794">
        <id>P00797</id>
        <label>REN</label>
    </interactant>
    <organismsDiffer>false</organismsDiffer>
    <experiments>2</experiments>
</comment>
<comment type="interaction">
    <interactant intactId="EBI-751728">
        <id>P01019</id>
    </interactant>
    <interactant intactId="EBI-2822550">
        <id>Q8IYM2</id>
        <label>SLFN12</label>
    </interactant>
    <organismsDiffer>false</organismsDiffer>
    <experiments>3</experiments>
</comment>
<comment type="interaction">
    <interactant intactId="EBI-751728">
        <id>P01019</id>
    </interactant>
    <interactant intactId="EBI-1752602">
        <id>Q9UMY4</id>
        <label>SNX12</label>
    </interactant>
    <organismsDiffer>false</organismsDiffer>
    <experiments>3</experiments>
</comment>
<comment type="interaction">
    <interactant intactId="EBI-751728">
        <id>P01019</id>
    </interactant>
    <interactant intactId="EBI-25830716">
        <id>O43493-5</id>
        <label>TGOLN2</label>
    </interactant>
    <organismsDiffer>false</organismsDiffer>
    <experiments>3</experiments>
</comment>
<comment type="interaction">
    <interactant intactId="EBI-751728">
        <id>P01019</id>
    </interactant>
    <interactant intactId="EBI-21757569">
        <id>Q8NFB2</id>
        <label>TMEM185A</label>
    </interactant>
    <organismsDiffer>false</organismsDiffer>
    <experiments>3</experiments>
</comment>
<comment type="interaction">
    <interactant intactId="EBI-751728">
        <id>P01019</id>
    </interactant>
    <interactant intactId="EBI-11337915">
        <id>Q8N0U8</id>
        <label>VKORC1L1</label>
    </interactant>
    <organismsDiffer>false</organismsDiffer>
    <experiments>3</experiments>
</comment>
<comment type="interaction">
    <interactant intactId="EBI-751728">
        <id>P01019</id>
    </interactant>
    <interactant intactId="EBI-764979">
        <id>P25095</id>
        <label>Agtr1</label>
    </interactant>
    <organismsDiffer>true</organismsDiffer>
    <experiments>10</experiments>
</comment>
<comment type="interaction">
    <interactant intactId="EBI-751728">
        <id>P01019</id>
    </interactant>
    <interactant intactId="EBI-115736">
        <id>Q10714</id>
        <label>Ance</label>
    </interactant>
    <organismsDiffer>true</organismsDiffer>
    <experiments>2</experiments>
</comment>
<comment type="interaction">
    <interactant intactId="EBI-25493366">
        <id>PRO_0000032457</id>
    </interactant>
    <interactant intactId="EBI-7730807">
        <id>Q9BYF1</id>
        <label>ACE2</label>
    </interactant>
    <organismsDiffer>false</organismsDiffer>
    <experiments>2</experiments>
</comment>
<comment type="interaction">
    <interactant intactId="EBI-6622938">
        <id>PRO_0000032458</id>
    </interactant>
    <interactant intactId="EBI-7730807">
        <id>Q9BYF1</id>
        <label>ACE2</label>
    </interactant>
    <organismsDiffer>false</organismsDiffer>
    <experiments>5</experiments>
</comment>
<comment type="interaction">
    <interactant intactId="EBI-6622938">
        <id>PRO_0000032458</id>
    </interactant>
    <interactant intactId="EBI-6623016">
        <id>P30556</id>
        <label>AGTR1</label>
    </interactant>
    <organismsDiffer>false</organismsDiffer>
    <experiments>2</experiments>
</comment>
<comment type="interaction">
    <interactant intactId="EBI-2927577">
        <id>PRO_0000032459</id>
    </interactant>
    <interactant intactId="EBI-1748067">
        <id>P50052</id>
        <label>AGTR2</label>
    </interactant>
    <organismsDiffer>false</organismsDiffer>
    <experiments>2</experiments>
</comment>
<comment type="subcellular location">
    <subcellularLocation>
        <location evidence="32 33 34">Secreted</location>
    </subcellularLocation>
</comment>
<comment type="tissue specificity">
    <text evidence="14">Expressed by the liver and secreted in plasma.</text>
</comment>
<comment type="PTM">
    <text evidence="15">Beta-decarboxylation of Asp-25 in angiotensin-2, by mononuclear leukocytes produces alanine (PubMed:17138938). The resulting peptide form, angiotensin-A, has the same affinity for the AT1 receptor as angiotensin-2, but a higher affinity for the AT2 receptor (PubMed:17138938).</text>
</comment>
<comment type="PTM">
    <text evidence="4 6 7 9 20">In response to low blood pressure, the enzyme renin/REN cleaves angiotensinogen to produce angiotensin-1 (PubMed:12045255). Angiotensin-1 is a substrate of ACE (angiotensin converting enzyme) that removes a dipeptide to yield the physiologically active peptide angiotensin-2 (PubMed:10969042, PubMed:4322742). Angiotensin-1 and angiotensin-2 can be further processed to generate angiotensin-3, angiotensin-4 (PubMed:10969042, PubMed:11815627). Angiotensin 1-9 is cleaved from angiotensin-1 by ACE2 and can be further processed by ACE to produce angiotensin 1-7, angiotensin 1-5 and angiotensin 1-4 (PubMed:10969042, PubMed:11815627). Angiotensin 1-7 has also been proposed to be cleaved from angiotensin-2 by ACE2 or from angiotensin-1 by MME (neprilysin) (PubMed:15283675).</text>
</comment>
<comment type="PTM">
    <text evidence="17">The disulfide bond is labile. Angiotensinogen is present in the circulation in a near 40:60 ratio with the oxidized disulfide-bonded form, which preferentially interacts with receptor-bound renin.</text>
</comment>
<comment type="disease" evidence="8 25">
    <disease id="DI-02647">
        <name>Essential hypertension</name>
        <acronym>EHT</acronym>
        <description>A condition in which blood pressure is consistently higher than normal with no identifiable cause.</description>
        <dbReference type="MIM" id="145500"/>
    </disease>
    <text>Disease susceptibility is associated with variants affecting the gene represented in this entry.</text>
</comment>
<comment type="disease" evidence="12">
    <disease id="DI-02257">
        <name>Renal tubular dysgenesis</name>
        <acronym>RTD</acronym>
        <description>Autosomal recessive severe disorder of renal tubular development characterized by persistent fetal anuria and perinatal death, probably due to pulmonary hypoplasia from early-onset oligohydramnios (the Potter phenotype).</description>
        <dbReference type="MIM" id="267430"/>
    </disease>
    <text>The disease is caused by variants affecting the gene represented in this entry.</text>
</comment>
<comment type="similarity">
    <text evidence="27">Belongs to the serpin family.</text>
</comment>
<comment type="sequence caution" evidence="27">
    <conflict type="erroneous initiation">
        <sequence resource="EMBL-CDS" id="AAA51679"/>
    </conflict>
    <text>Extended N-terminus.</text>
</comment>
<comment type="sequence caution" evidence="27">
    <conflict type="erroneous initiation">
        <sequence resource="EMBL-CDS" id="AAA51731"/>
    </conflict>
    <text>Extended N-terminus.</text>
</comment>
<comment type="sequence caution" evidence="27">
    <conflict type="erroneous initiation">
        <sequence resource="EMBL-CDS" id="AAA52282"/>
    </conflict>
    <text>Extended N-terminus.</text>
</comment>
<comment type="sequence caution" evidence="27">
    <conflict type="erroneous initiation">
        <sequence resource="EMBL-CDS" id="AAH11519"/>
    </conflict>
    <text>Extended N-terminus.</text>
</comment>
<comment type="sequence caution" evidence="27">
    <conflict type="erroneous initiation">
        <sequence resource="EMBL-CDS" id="CAA33385"/>
    </conflict>
    <text>Extended N-terminus.</text>
</comment>
<comment type="online information" name="Wikipedia">
    <link uri="https://en.wikipedia.org/wiki/Angiotensin"/>
    <text>Angiotensin entry</text>
</comment>
<proteinExistence type="evidence at protein level"/>
<sequence>MAPAGVSLRATILCLLAWAGLAAGDRVYIHPFHLVIHNESTCEQLAKANAGKPKDPTFIPAPIQAKTSPVDEKALQDQLVLVAAKLDTEDKLRAAMVGMLANFLGFRIYGMHSELWGVVHGATVLSPTAVFGTLASLYLGALDHTADRLQAILGVPWKDKNCTSRLDAHKVLSALQAVQGLLVAQGRADSQAQLLLSTVVGVFTAPGLHLKQPFVQGLALYTPVVLPRSLDFTELDVAAEKIDRFMQAVTGWKTGCSLMGASVDSTLAFNTYVHFQGKMKGFSLLAEPQEFWVDNSTSVSVPMLSGMGTFQHWSDIQDNFSVTQVPFTESACLLLIQPHYASDLDKVEGLTFQQNSLNWMKKLSPRTIHLTMPQLVLQGSYDLQDLLAQAELPAILHTELNLQKLSNDRIRVGEVLNSIFFELEADEREPTESTQQLNKPEVLEVTLNRPFLFAVYDQSATALHFLGRVANPLSTA</sequence>
<feature type="signal peptide" evidence="19 21 22">
    <location>
        <begin position="1"/>
        <end position="24"/>
    </location>
</feature>
<feature type="chain" id="PRO_0000032456" description="Angiotensinogen">
    <location>
        <begin position="25"/>
        <end position="476"/>
    </location>
</feature>
<feature type="peptide" id="PRO_0000032457" description="Angiotensin-1" evidence="19">
    <location>
        <begin position="25"/>
        <end position="34"/>
    </location>
</feature>
<feature type="peptide" id="PRO_0000420659" description="Angiotensin 1-9" evidence="28">
    <location>
        <begin position="25"/>
        <end position="33"/>
    </location>
</feature>
<feature type="peptide" id="PRO_0000032458" description="Angiotensin-2" evidence="30 35">
    <location>
        <begin position="25"/>
        <end position="32"/>
    </location>
</feature>
<feature type="peptide" id="PRO_0000420660" description="Angiotensin 1-7" evidence="31">
    <location>
        <begin position="25"/>
        <end position="31"/>
    </location>
</feature>
<feature type="peptide" id="PRO_0000420661" description="Angiotensin 1-5" evidence="28 30">
    <location>
        <begin position="25"/>
        <end position="29"/>
    </location>
</feature>
<feature type="peptide" id="PRO_0000420662" description="Angiotensin 1-4" evidence="28 30">
    <location>
        <begin position="25"/>
        <end position="28"/>
    </location>
</feature>
<feature type="peptide" id="PRO_0000032459" description="Angiotensin-3" evidence="28 29 30">
    <location>
        <begin position="26"/>
        <end position="32"/>
    </location>
</feature>
<feature type="peptide" id="PRO_0000420663" description="Angiotensin-4" evidence="28 30">
    <location>
        <begin position="27"/>
        <end position="32"/>
    </location>
</feature>
<feature type="modified residue" description="Beta-decarboxylated aspartate; in form angiotensin-A" evidence="15">
    <location>
        <position position="25"/>
    </location>
</feature>
<feature type="glycosylation site" description="N-linked (GlcNAc...) asparagine" evidence="13 16 18">
    <location>
        <position position="38"/>
    </location>
</feature>
<feature type="glycosylation site" description="N-linked (GlcNAc...) asparagine" evidence="18">
    <location>
        <position position="161"/>
    </location>
</feature>
<feature type="glycosylation site" description="N-linked (GlcNAc...) asparagine" evidence="18">
    <location>
        <position position="295"/>
    </location>
</feature>
<feature type="glycosylation site" description="N-linked (GlcNAc...) asparagine" evidence="18">
    <location>
        <position position="319"/>
    </location>
</feature>
<feature type="disulfide bond" evidence="17">
    <location>
        <begin position="42"/>
        <end position="162"/>
    </location>
</feature>
<feature type="sequence variant" id="VAR_022933" description="Risk factor for pre-eclampsia; alters the reactions with renin and angiotensin-converting enzyme; dbSNP:rs41271499." evidence="24">
    <original>L</original>
    <variation>F</variation>
    <location>
        <position position="34"/>
    </location>
</feature>
<feature type="sequence variant" id="VAR_029166" description="In dbSNP:rs11568032.">
    <original>E</original>
    <variation>K</variation>
    <location>
        <position position="89"/>
    </location>
</feature>
<feature type="sequence variant" id="VAR_051939" description="In dbSNP:rs2229389.">
    <original>G</original>
    <variation>C</variation>
    <location>
        <position position="105"/>
    </location>
</feature>
<feature type="sequence variant" id="VAR_035431" description="In dbSNP:rs34829218.">
    <original>T</original>
    <variation>M</variation>
    <location>
        <position position="128"/>
    </location>
</feature>
<feature type="sequence variant" id="VAR_007093" description="Risk factor for hypertension; dbSNP:rs4762." evidence="8">
    <original>T</original>
    <variation>M</variation>
    <location>
        <position position="198"/>
    </location>
</feature>
<feature type="sequence variant" id="VAR_007094" description="Risk factor for hypertension; dbSNP:rs765678426." evidence="23">
    <original>T</original>
    <variation>I</variation>
    <location>
        <position position="233"/>
    </location>
</feature>
<feature type="sequence variant" id="VAR_007095" description="Risk factor for hypertension; dbSNP:rs5041." evidence="23">
    <original>L</original>
    <variation>R</variation>
    <location>
        <position position="235"/>
    </location>
</feature>
<feature type="sequence variant" id="VAR_029167" description="In dbSNP:rs11568053.">
    <original>M</original>
    <variation>I</variation>
    <location>
        <position position="259"/>
    </location>
</feature>
<feature type="sequence variant" id="VAR_007096" description="Risk factor for essential hypertension and pre-eclampsia; dbSNP:rs699." evidence="8 25">
    <original>M</original>
    <variation>T</variation>
    <location>
        <position position="259"/>
    </location>
</feature>
<feature type="sequence variant" id="VAR_007097" description="Risk factor for hypertension; alters the structure, glycosylation and secretion of angiotensinogen; dbSNP:rs56073403." evidence="8 23 26">
    <original>Y</original>
    <variation>C</variation>
    <location>
        <position position="272"/>
    </location>
</feature>
<feature type="sequence variant" id="VAR_035432" description="In dbSNP:rs17856352." evidence="10">
    <original>P</original>
    <variation>S</variation>
    <location>
        <position position="326"/>
    </location>
</feature>
<feature type="sequence variant" id="VAR_035433" description="In RTD; dbSNP:rs74315283." evidence="12">
    <original>R</original>
    <variation>Q</variation>
    <location>
        <position position="366"/>
    </location>
</feature>
<feature type="sequence variant" id="VAR_014573" description="In dbSNP:rs1805090.">
    <original>L</original>
    <variation>M</variation>
    <location>
        <position position="383"/>
    </location>
</feature>
<feature type="sequence conflict" description="In Ref. 8; AA sequence." evidence="27" ref="8">
    <original>C</original>
    <variation>S</variation>
    <location>
        <position position="42"/>
    </location>
</feature>
<feature type="sequence conflict" description="In Ref. 8; AA sequence." evidence="27" ref="8">
    <original>N</original>
    <variation>D</variation>
    <location>
        <position position="49"/>
    </location>
</feature>
<feature type="sequence conflict" description="In Ref. 2; AAA51679." evidence="27" ref="2">
    <original>Q</original>
    <variation>E</variation>
    <location>
        <position position="324"/>
    </location>
</feature>
<feature type="strand" evidence="45">
    <location>
        <begin position="26"/>
        <end position="28"/>
    </location>
</feature>
<feature type="helix" evidence="44">
    <location>
        <begin position="33"/>
        <end position="35"/>
    </location>
</feature>
<feature type="turn" evidence="42">
    <location>
        <begin position="39"/>
        <end position="41"/>
    </location>
</feature>
<feature type="strand" evidence="41">
    <location>
        <begin position="50"/>
        <end position="53"/>
    </location>
</feature>
<feature type="helix" evidence="42">
    <location>
        <begin position="72"/>
        <end position="84"/>
    </location>
</feature>
<feature type="helix" evidence="42">
    <location>
        <begin position="88"/>
        <end position="110"/>
    </location>
</feature>
<feature type="strand" evidence="42">
    <location>
        <begin position="113"/>
        <end position="115"/>
    </location>
</feature>
<feature type="turn" evidence="42">
    <location>
        <begin position="116"/>
        <end position="118"/>
    </location>
</feature>
<feature type="strand" evidence="42">
    <location>
        <begin position="119"/>
        <end position="122"/>
    </location>
</feature>
<feature type="helix" evidence="42">
    <location>
        <begin position="127"/>
        <end position="139"/>
    </location>
</feature>
<feature type="helix" evidence="42">
    <location>
        <begin position="143"/>
        <end position="153"/>
    </location>
</feature>
<feature type="strand" evidence="42">
    <location>
        <begin position="158"/>
        <end position="160"/>
    </location>
</feature>
<feature type="turn" evidence="41">
    <location>
        <begin position="162"/>
        <end position="164"/>
    </location>
</feature>
<feature type="helix" evidence="42">
    <location>
        <begin position="168"/>
        <end position="183"/>
    </location>
</feature>
<feature type="turn" evidence="43">
    <location>
        <begin position="184"/>
        <end position="186"/>
    </location>
</feature>
<feature type="strand" evidence="43">
    <location>
        <begin position="188"/>
        <end position="191"/>
    </location>
</feature>
<feature type="strand" evidence="42">
    <location>
        <begin position="194"/>
        <end position="204"/>
    </location>
</feature>
<feature type="helix" evidence="42">
    <location>
        <begin position="212"/>
        <end position="221"/>
    </location>
</feature>
<feature type="strand" evidence="42">
    <location>
        <begin position="225"/>
        <end position="229"/>
    </location>
</feature>
<feature type="helix" evidence="42">
    <location>
        <begin position="235"/>
        <end position="250"/>
    </location>
</feature>
<feature type="helix" evidence="43">
    <location>
        <begin position="258"/>
        <end position="260"/>
    </location>
</feature>
<feature type="strand" evidence="42">
    <location>
        <begin position="267"/>
        <end position="278"/>
    </location>
</feature>
<feature type="strand" evidence="42">
    <location>
        <begin position="282"/>
        <end position="284"/>
    </location>
</feature>
<feature type="strand" evidence="42">
    <location>
        <begin position="289"/>
        <end position="291"/>
    </location>
</feature>
<feature type="strand" evidence="42">
    <location>
        <begin position="293"/>
        <end position="296"/>
    </location>
</feature>
<feature type="strand" evidence="42">
    <location>
        <begin position="299"/>
        <end position="301"/>
    </location>
</feature>
<feature type="strand" evidence="42">
    <location>
        <begin position="303"/>
        <end position="315"/>
    </location>
</feature>
<feature type="turn" evidence="42">
    <location>
        <begin position="316"/>
        <end position="319"/>
    </location>
</feature>
<feature type="strand" evidence="42">
    <location>
        <begin position="320"/>
        <end position="340"/>
    </location>
</feature>
<feature type="helix" evidence="42">
    <location>
        <begin position="341"/>
        <end position="343"/>
    </location>
</feature>
<feature type="helix" evidence="42">
    <location>
        <begin position="344"/>
        <end position="351"/>
    </location>
</feature>
<feature type="helix" evidence="42">
    <location>
        <begin position="354"/>
        <end position="360"/>
    </location>
</feature>
<feature type="strand" evidence="42">
    <location>
        <begin position="364"/>
        <end position="373"/>
    </location>
</feature>
<feature type="strand" evidence="42">
    <location>
        <begin position="376"/>
        <end position="382"/>
    </location>
</feature>
<feature type="helix" evidence="42">
    <location>
        <begin position="383"/>
        <end position="386"/>
    </location>
</feature>
<feature type="turn" evidence="42">
    <location>
        <begin position="387"/>
        <end position="391"/>
    </location>
</feature>
<feature type="helix" evidence="42">
    <location>
        <begin position="392"/>
        <end position="395"/>
    </location>
</feature>
<feature type="strand" evidence="41">
    <location>
        <begin position="398"/>
        <end position="400"/>
    </location>
</feature>
<feature type="turn" evidence="42">
    <location>
        <begin position="403"/>
        <end position="405"/>
    </location>
</feature>
<feature type="strand" evidence="42">
    <location>
        <begin position="412"/>
        <end position="424"/>
    </location>
</feature>
<feature type="strand" evidence="42">
    <location>
        <begin position="443"/>
        <end position="446"/>
    </location>
</feature>
<feature type="strand" evidence="42">
    <location>
        <begin position="451"/>
        <end position="457"/>
    </location>
</feature>
<feature type="turn" evidence="42">
    <location>
        <begin position="458"/>
        <end position="461"/>
    </location>
</feature>
<feature type="strand" evidence="42">
    <location>
        <begin position="462"/>
        <end position="470"/>
    </location>
</feature>
<dbReference type="EMBL" id="K02215">
    <property type="protein sequence ID" value="AAA51731.1"/>
    <property type="status" value="ALT_INIT"/>
    <property type="molecule type" value="mRNA"/>
</dbReference>
<dbReference type="EMBL" id="M24689">
    <property type="protein sequence ID" value="AAA51679.1"/>
    <property type="status" value="ALT_INIT"/>
    <property type="molecule type" value="Genomic_DNA"/>
</dbReference>
<dbReference type="EMBL" id="M24686">
    <property type="protein sequence ID" value="AAA51679.1"/>
    <property type="status" value="JOINED"/>
    <property type="molecule type" value="Genomic_DNA"/>
</dbReference>
<dbReference type="EMBL" id="M24687">
    <property type="protein sequence ID" value="AAA51679.1"/>
    <property type="status" value="JOINED"/>
    <property type="molecule type" value="Genomic_DNA"/>
</dbReference>
<dbReference type="EMBL" id="M24688">
    <property type="protein sequence ID" value="AAA51679.1"/>
    <property type="status" value="JOINED"/>
    <property type="molecule type" value="Genomic_DNA"/>
</dbReference>
<dbReference type="EMBL" id="X15324">
    <property type="protein sequence ID" value="CAA33385.1"/>
    <property type="status" value="ALT_INIT"/>
    <property type="molecule type" value="Genomic_DNA"/>
</dbReference>
<dbReference type="EMBL" id="X15325">
    <property type="protein sequence ID" value="CAA33385.1"/>
    <property type="status" value="JOINED"/>
    <property type="molecule type" value="Genomic_DNA"/>
</dbReference>
<dbReference type="EMBL" id="X15326">
    <property type="protein sequence ID" value="CAA33385.1"/>
    <property type="status" value="JOINED"/>
    <property type="molecule type" value="Genomic_DNA"/>
</dbReference>
<dbReference type="EMBL" id="X15327">
    <property type="protein sequence ID" value="CAA33385.1"/>
    <property type="status" value="JOINED"/>
    <property type="molecule type" value="Genomic_DNA"/>
</dbReference>
<dbReference type="EMBL" id="BC011519">
    <property type="protein sequence ID" value="AAH11519.1"/>
    <property type="status" value="ALT_INIT"/>
    <property type="molecule type" value="mRNA"/>
</dbReference>
<dbReference type="EMBL" id="M69110">
    <property type="protein sequence ID" value="AAA52282.1"/>
    <property type="status" value="ALT_INIT"/>
    <property type="molecule type" value="mRNA"/>
</dbReference>
<dbReference type="EMBL" id="S78529">
    <property type="protein sequence ID" value="AAD14287.1"/>
    <property type="molecule type" value="Genomic_DNA"/>
</dbReference>
<dbReference type="EMBL" id="S78530">
    <property type="protein sequence ID" value="AAD14288.1"/>
    <property type="molecule type" value="Genomic_DNA"/>
</dbReference>
<dbReference type="CCDS" id="CCDS1585.2"/>
<dbReference type="PIR" id="A35203">
    <property type="entry name" value="ANHU"/>
</dbReference>
<dbReference type="RefSeq" id="NP_000020.1">
    <property type="nucleotide sequence ID" value="NM_000029.3"/>
</dbReference>
<dbReference type="RefSeq" id="NP_001369746.2">
    <property type="nucleotide sequence ID" value="NM_001382817.3"/>
</dbReference>
<dbReference type="RefSeq" id="NP_001371408.1">
    <property type="nucleotide sequence ID" value="NM_001384479.1"/>
</dbReference>
<dbReference type="PDB" id="1N9U">
    <property type="method" value="NMR"/>
    <property type="chains" value="A=25-34"/>
</dbReference>
<dbReference type="PDB" id="1N9V">
    <property type="method" value="NMR"/>
    <property type="chains" value="A=25-32"/>
</dbReference>
<dbReference type="PDB" id="2JP8">
    <property type="method" value="NMR"/>
    <property type="chains" value="P=25-31"/>
</dbReference>
<dbReference type="PDB" id="2WXW">
    <property type="method" value="X-ray"/>
    <property type="resolution" value="3.30 A"/>
    <property type="chains" value="A=25-476"/>
</dbReference>
<dbReference type="PDB" id="2X0B">
    <property type="method" value="X-ray"/>
    <property type="resolution" value="4.33 A"/>
    <property type="chains" value="B/D/F/H=25-476"/>
</dbReference>
<dbReference type="PDB" id="3CK0">
    <property type="method" value="X-ray"/>
    <property type="resolution" value="3.00 A"/>
    <property type="chains" value="P=25-32"/>
</dbReference>
<dbReference type="PDB" id="3WOO">
    <property type="method" value="X-ray"/>
    <property type="resolution" value="1.80 A"/>
    <property type="chains" value="C/D=27-32"/>
</dbReference>
<dbReference type="PDB" id="3WOR">
    <property type="method" value="X-ray"/>
    <property type="resolution" value="2.10 A"/>
    <property type="chains" value="C/D=25-32"/>
</dbReference>
<dbReference type="PDB" id="4AA1">
    <property type="method" value="X-ray"/>
    <property type="resolution" value="1.99 A"/>
    <property type="chains" value="P=25-32"/>
</dbReference>
<dbReference type="PDB" id="4APH">
    <property type="method" value="X-ray"/>
    <property type="resolution" value="1.99 A"/>
    <property type="chains" value="P=25-32"/>
</dbReference>
<dbReference type="PDB" id="4FYS">
    <property type="method" value="X-ray"/>
    <property type="resolution" value="2.01 A"/>
    <property type="chains" value="C=27-32"/>
</dbReference>
<dbReference type="PDB" id="5E2Q">
    <property type="method" value="X-ray"/>
    <property type="resolution" value="2.40 A"/>
    <property type="chains" value="B=25-32"/>
</dbReference>
<dbReference type="PDB" id="5M3X">
    <property type="method" value="X-ray"/>
    <property type="resolution" value="2.63 A"/>
    <property type="chains" value="A/B=35-476"/>
</dbReference>
<dbReference type="PDB" id="5M3Y">
    <property type="method" value="X-ray"/>
    <property type="resolution" value="2.30 A"/>
    <property type="chains" value="A=25-476"/>
</dbReference>
<dbReference type="PDB" id="5XJM">
    <property type="method" value="X-ray"/>
    <property type="resolution" value="3.20 A"/>
    <property type="chains" value="B=26-31"/>
</dbReference>
<dbReference type="PDB" id="6I3F">
    <property type="method" value="X-ray"/>
    <property type="resolution" value="2.55 A"/>
    <property type="chains" value="A=25-476"/>
</dbReference>
<dbReference type="PDB" id="6I3I">
    <property type="method" value="X-ray"/>
    <property type="resolution" value="2.97 A"/>
    <property type="chains" value="A=25-476"/>
</dbReference>
<dbReference type="PDB" id="6JOD">
    <property type="method" value="X-ray"/>
    <property type="resolution" value="3.20 A"/>
    <property type="chains" value="B=25-32"/>
</dbReference>
<dbReference type="PDB" id="6OS0">
    <property type="method" value="X-ray"/>
    <property type="resolution" value="2.90 A"/>
    <property type="chains" value="B=25-32"/>
</dbReference>
<dbReference type="PDB" id="7C6A">
    <property type="method" value="X-ray"/>
    <property type="resolution" value="3.40 A"/>
    <property type="chains" value="B=26-31"/>
</dbReference>
<dbReference type="PDBsum" id="1N9U"/>
<dbReference type="PDBsum" id="1N9V"/>
<dbReference type="PDBsum" id="2JP8"/>
<dbReference type="PDBsum" id="2WXW"/>
<dbReference type="PDBsum" id="2X0B"/>
<dbReference type="PDBsum" id="3CK0"/>
<dbReference type="PDBsum" id="3WOO"/>
<dbReference type="PDBsum" id="3WOR"/>
<dbReference type="PDBsum" id="4AA1"/>
<dbReference type="PDBsum" id="4APH"/>
<dbReference type="PDBsum" id="4FYS"/>
<dbReference type="PDBsum" id="5E2Q"/>
<dbReference type="PDBsum" id="5M3X"/>
<dbReference type="PDBsum" id="5M3Y"/>
<dbReference type="PDBsum" id="5XJM"/>
<dbReference type="PDBsum" id="6I3F"/>
<dbReference type="PDBsum" id="6I3I"/>
<dbReference type="PDBsum" id="6JOD"/>
<dbReference type="PDBsum" id="6OS0"/>
<dbReference type="PDBsum" id="7C6A"/>
<dbReference type="SMR" id="P01019"/>
<dbReference type="BioGRID" id="106690">
    <property type="interactions" value="36"/>
</dbReference>
<dbReference type="CORUM" id="P01019"/>
<dbReference type="DIP" id="DIP-309N"/>
<dbReference type="FunCoup" id="P01019">
    <property type="interactions" value="902"/>
</dbReference>
<dbReference type="IntAct" id="P01019">
    <property type="interactions" value="30"/>
</dbReference>
<dbReference type="MINT" id="P01019"/>
<dbReference type="STRING" id="9606.ENSP00000355627"/>
<dbReference type="BindingDB" id="P01019"/>
<dbReference type="ChEMBL" id="CHEMBL3596085"/>
<dbReference type="DrugBank" id="DB09130">
    <property type="generic name" value="Copper"/>
</dbReference>
<dbReference type="DrugBank" id="DB01593">
    <property type="generic name" value="Zinc"/>
</dbReference>
<dbReference type="DrugBank" id="DB14487">
    <property type="generic name" value="Zinc acetate"/>
</dbReference>
<dbReference type="MEROPS" id="I04.953"/>
<dbReference type="CarbonylDB" id="P01019"/>
<dbReference type="GlyConnect" id="703">
    <property type="glycosylation" value="12 N-Linked glycans (3 sites)"/>
</dbReference>
<dbReference type="GlyCosmos" id="P01019">
    <property type="glycosylation" value="5 sites, 21 glycans"/>
</dbReference>
<dbReference type="GlyGen" id="P01019">
    <property type="glycosylation" value="4 sites"/>
</dbReference>
<dbReference type="iPTMnet" id="P01019"/>
<dbReference type="PhosphoSitePlus" id="P01019"/>
<dbReference type="SwissPalm" id="P01019"/>
<dbReference type="BioMuta" id="AGT"/>
<dbReference type="DMDM" id="113880"/>
<dbReference type="jPOST" id="P01019"/>
<dbReference type="MassIVE" id="P01019"/>
<dbReference type="PaxDb" id="9606-ENSP00000355627"/>
<dbReference type="PeptideAtlas" id="P01019"/>
<dbReference type="ProteomicsDB" id="51306"/>
<dbReference type="ABCD" id="P01019">
    <property type="antibodies" value="5 sequenced antibodies"/>
</dbReference>
<dbReference type="Antibodypedia" id="866">
    <property type="antibodies" value="1020 antibodies from 43 providers"/>
</dbReference>
<dbReference type="DNASU" id="183"/>
<dbReference type="Ensembl" id="ENST00000366667.6">
    <property type="protein sequence ID" value="ENSP00000355627.5"/>
    <property type="gene ID" value="ENSG00000135744.9"/>
</dbReference>
<dbReference type="Ensembl" id="ENST00000679738.1">
    <property type="protein sequence ID" value="ENSP00000505063.1"/>
    <property type="gene ID" value="ENSG00000135744.9"/>
</dbReference>
<dbReference type="Ensembl" id="ENST00000680041.1">
    <property type="protein sequence ID" value="ENSP00000504866.1"/>
    <property type="gene ID" value="ENSG00000135744.9"/>
</dbReference>
<dbReference type="Ensembl" id="ENST00000681269.1">
    <property type="protein sequence ID" value="ENSP00000505985.1"/>
    <property type="gene ID" value="ENSG00000135744.9"/>
</dbReference>
<dbReference type="Ensembl" id="ENST00000681514.1">
    <property type="protein sequence ID" value="ENSP00000505963.1"/>
    <property type="gene ID" value="ENSG00000135744.9"/>
</dbReference>
<dbReference type="GeneID" id="183"/>
<dbReference type="MANE-Select" id="ENST00000366667.6">
    <property type="protein sequence ID" value="ENSP00000355627.5"/>
    <property type="RefSeq nucleotide sequence ID" value="NM_001384479.1"/>
    <property type="RefSeq protein sequence ID" value="NP_001371408.1"/>
</dbReference>
<dbReference type="UCSC" id="uc001hty.6">
    <property type="organism name" value="human"/>
</dbReference>
<dbReference type="AGR" id="HGNC:333"/>
<dbReference type="CTD" id="183"/>
<dbReference type="DisGeNET" id="183"/>
<dbReference type="GeneCards" id="AGT"/>
<dbReference type="HGNC" id="HGNC:333">
    <property type="gene designation" value="AGT"/>
</dbReference>
<dbReference type="HPA" id="ENSG00000135744">
    <property type="expression patterns" value="Tissue enriched (liver)"/>
</dbReference>
<dbReference type="MalaCards" id="AGT"/>
<dbReference type="MIM" id="106150">
    <property type="type" value="gene"/>
</dbReference>
<dbReference type="MIM" id="145500">
    <property type="type" value="phenotype"/>
</dbReference>
<dbReference type="MIM" id="267430">
    <property type="type" value="phenotype"/>
</dbReference>
<dbReference type="neXtProt" id="NX_P01019"/>
<dbReference type="OpenTargets" id="ENSG00000135744"/>
<dbReference type="Orphanet" id="97369">
    <property type="disease" value="Renal tubular dysgenesis of genetic origin"/>
</dbReference>
<dbReference type="PharmGKB" id="PA42"/>
<dbReference type="VEuPathDB" id="HostDB:ENSG00000135744"/>
<dbReference type="eggNOG" id="KOG2392">
    <property type="taxonomic scope" value="Eukaryota"/>
</dbReference>
<dbReference type="GeneTree" id="ENSGT00890000139531"/>
<dbReference type="HOGENOM" id="CLU_045267_1_0_1"/>
<dbReference type="InParanoid" id="P01019"/>
<dbReference type="OrthoDB" id="7817921at2759"/>
<dbReference type="PAN-GO" id="P01019">
    <property type="GO annotations" value="4 GO annotations based on evolutionary models"/>
</dbReference>
<dbReference type="PhylomeDB" id="P01019"/>
<dbReference type="TreeFam" id="TF343201"/>
<dbReference type="PathwayCommons" id="P01019"/>
<dbReference type="Reactome" id="R-HSA-1989781">
    <property type="pathway name" value="PPARA activates gene expression"/>
</dbReference>
<dbReference type="Reactome" id="R-HSA-2022377">
    <property type="pathway name" value="Metabolism of Angiotensinogen to Angiotensins"/>
</dbReference>
<dbReference type="Reactome" id="R-HSA-375276">
    <property type="pathway name" value="Peptide ligand-binding receptors"/>
</dbReference>
<dbReference type="Reactome" id="R-HSA-416476">
    <property type="pathway name" value="G alpha (q) signalling events"/>
</dbReference>
<dbReference type="Reactome" id="R-HSA-418594">
    <property type="pathway name" value="G alpha (i) signalling events"/>
</dbReference>
<dbReference type="SignaLink" id="P01019"/>
<dbReference type="SIGNOR" id="P01019"/>
<dbReference type="BioGRID-ORCS" id="183">
    <property type="hits" value="18 hits in 1150 CRISPR screens"/>
</dbReference>
<dbReference type="ChiTaRS" id="AGT">
    <property type="organism name" value="human"/>
</dbReference>
<dbReference type="EvolutionaryTrace" id="P01019"/>
<dbReference type="GeneWiki" id="Angiotensin"/>
<dbReference type="GenomeRNAi" id="183"/>
<dbReference type="Pharos" id="P01019">
    <property type="development level" value="Tbio"/>
</dbReference>
<dbReference type="PRO" id="PR:P01019"/>
<dbReference type="Proteomes" id="UP000005640">
    <property type="component" value="Chromosome 1"/>
</dbReference>
<dbReference type="RNAct" id="P01019">
    <property type="molecule type" value="protein"/>
</dbReference>
<dbReference type="Bgee" id="ENSG00000135744">
    <property type="expression patterns" value="Expressed in liver and 179 other cell types or tissues"/>
</dbReference>
<dbReference type="GO" id="GO:0072562">
    <property type="term" value="C:blood microparticle"/>
    <property type="evidence" value="ECO:0007005"/>
    <property type="project" value="UniProtKB"/>
</dbReference>
<dbReference type="GO" id="GO:0062023">
    <property type="term" value="C:collagen-containing extracellular matrix"/>
    <property type="evidence" value="ECO:0007005"/>
    <property type="project" value="BHF-UCL"/>
</dbReference>
<dbReference type="GO" id="GO:0070062">
    <property type="term" value="C:extracellular exosome"/>
    <property type="evidence" value="ECO:0007005"/>
    <property type="project" value="UniProtKB"/>
</dbReference>
<dbReference type="GO" id="GO:0005576">
    <property type="term" value="C:extracellular region"/>
    <property type="evidence" value="ECO:0007005"/>
    <property type="project" value="BHF-UCL"/>
</dbReference>
<dbReference type="GO" id="GO:0005615">
    <property type="term" value="C:extracellular space"/>
    <property type="evidence" value="ECO:0000314"/>
    <property type="project" value="BHF-UCL"/>
</dbReference>
<dbReference type="GO" id="GO:0008083">
    <property type="term" value="F:growth factor activity"/>
    <property type="evidence" value="ECO:0000314"/>
    <property type="project" value="BHF-UCL"/>
</dbReference>
<dbReference type="GO" id="GO:0005179">
    <property type="term" value="F:hormone activity"/>
    <property type="evidence" value="ECO:0000314"/>
    <property type="project" value="UniProt"/>
</dbReference>
<dbReference type="GO" id="GO:0004867">
    <property type="term" value="F:serine-type endopeptidase inhibitor activity"/>
    <property type="evidence" value="ECO:0000318"/>
    <property type="project" value="GO_Central"/>
</dbReference>
<dbReference type="GO" id="GO:0031702">
    <property type="term" value="F:type 1 angiotensin receptor binding"/>
    <property type="evidence" value="ECO:0000353"/>
    <property type="project" value="BHF-UCL"/>
</dbReference>
<dbReference type="GO" id="GO:0031703">
    <property type="term" value="F:type 2 angiotensin receptor binding"/>
    <property type="evidence" value="ECO:0000353"/>
    <property type="project" value="BHF-UCL"/>
</dbReference>
<dbReference type="GO" id="GO:0038166">
    <property type="term" value="P:angiotensin-activated signaling pathway"/>
    <property type="evidence" value="ECO:0000314"/>
    <property type="project" value="BHF-UCL"/>
</dbReference>
<dbReference type="GO" id="GO:0001974">
    <property type="term" value="P:blood vessel remodeling"/>
    <property type="evidence" value="ECO:0000304"/>
    <property type="project" value="BHF-UCL"/>
</dbReference>
<dbReference type="GO" id="GO:0007267">
    <property type="term" value="P:cell-cell signaling"/>
    <property type="evidence" value="ECO:0000304"/>
    <property type="project" value="ProtInc"/>
</dbReference>
<dbReference type="GO" id="GO:0007186">
    <property type="term" value="P:G protein-coupled receptor signaling pathway"/>
    <property type="evidence" value="ECO:0000314"/>
    <property type="project" value="BHF-UCL"/>
</dbReference>
<dbReference type="GO" id="GO:0007199">
    <property type="term" value="P:G protein-coupled receptor signaling pathway coupled to cGMP nucleotide second messenger"/>
    <property type="evidence" value="ECO:0000304"/>
    <property type="project" value="BHF-UCL"/>
</dbReference>
<dbReference type="GO" id="GO:0001822">
    <property type="term" value="P:kidney development"/>
    <property type="evidence" value="ECO:0000315"/>
    <property type="project" value="BHF-UCL"/>
</dbReference>
<dbReference type="GO" id="GO:0034374">
    <property type="term" value="P:low-density lipoprotein particle remodeling"/>
    <property type="evidence" value="ECO:0000303"/>
    <property type="project" value="BHF-UCL"/>
</dbReference>
<dbReference type="GO" id="GO:0002034">
    <property type="term" value="P:maintenance of blood vessel diameter homeostasis by renin-angiotensin"/>
    <property type="evidence" value="ECO:0000314"/>
    <property type="project" value="UniProt"/>
</dbReference>
<dbReference type="GO" id="GO:0043407">
    <property type="term" value="P:negative regulation of MAP kinase activity"/>
    <property type="evidence" value="ECO:0000315"/>
    <property type="project" value="CACAO"/>
</dbReference>
<dbReference type="GO" id="GO:0051387">
    <property type="term" value="P:negative regulation of neurotrophin TRK receptor signaling pathway"/>
    <property type="evidence" value="ECO:0000314"/>
    <property type="project" value="BHF-UCL"/>
</dbReference>
<dbReference type="GO" id="GO:0038060">
    <property type="term" value="P:nitric oxide-cGMP-mediated signaling"/>
    <property type="evidence" value="ECO:0000304"/>
    <property type="project" value="BHF-UCL"/>
</dbReference>
<dbReference type="GO" id="GO:0007200">
    <property type="term" value="P:phospholipase C-activating G protein-coupled receptor signaling pathway"/>
    <property type="evidence" value="ECO:0000303"/>
    <property type="project" value="BHF-UCL"/>
</dbReference>
<dbReference type="GO" id="GO:0090190">
    <property type="term" value="P:positive regulation of branching involved in ureteric bud morphogenesis"/>
    <property type="evidence" value="ECO:0000314"/>
    <property type="project" value="UniProtKB"/>
</dbReference>
<dbReference type="GO" id="GO:0010613">
    <property type="term" value="P:positive regulation of cardiac muscle hypertrophy"/>
    <property type="evidence" value="ECO:0000250"/>
    <property type="project" value="BHF-UCL"/>
</dbReference>
<dbReference type="GO" id="GO:0090205">
    <property type="term" value="P:positive regulation of cholesterol metabolic process"/>
    <property type="evidence" value="ECO:0000314"/>
    <property type="project" value="BHF-UCL"/>
</dbReference>
<dbReference type="GO" id="GO:0001819">
    <property type="term" value="P:positive regulation of cytokine production"/>
    <property type="evidence" value="ECO:0000314"/>
    <property type="project" value="BHF-UCL"/>
</dbReference>
<dbReference type="GO" id="GO:0045893">
    <property type="term" value="P:positive regulation of DNA-templated transcription"/>
    <property type="evidence" value="ECO:0000314"/>
    <property type="project" value="UniProtKB"/>
</dbReference>
<dbReference type="GO" id="GO:0010595">
    <property type="term" value="P:positive regulation of endothelial cell migration"/>
    <property type="evidence" value="ECO:0000314"/>
    <property type="project" value="BHF-UCL"/>
</dbReference>
<dbReference type="GO" id="GO:0045742">
    <property type="term" value="P:positive regulation of epidermal growth factor receptor signaling pathway"/>
    <property type="evidence" value="ECO:0000314"/>
    <property type="project" value="BHF-UCL"/>
</dbReference>
<dbReference type="GO" id="GO:0010718">
    <property type="term" value="P:positive regulation of epithelial to mesenchymal transition"/>
    <property type="evidence" value="ECO:0000250"/>
    <property type="project" value="UniProtKB"/>
</dbReference>
<dbReference type="GO" id="GO:1901203">
    <property type="term" value="P:positive regulation of extracellular matrix assembly"/>
    <property type="evidence" value="ECO:0000314"/>
    <property type="project" value="BHF-UCL"/>
</dbReference>
<dbReference type="GO" id="GO:2001238">
    <property type="term" value="P:positive regulation of extrinsic apoptotic signaling pathway"/>
    <property type="evidence" value="ECO:0000314"/>
    <property type="project" value="BHF-UCL"/>
</dbReference>
<dbReference type="GO" id="GO:0048146">
    <property type="term" value="P:positive regulation of fibroblast proliferation"/>
    <property type="evidence" value="ECO:0000250"/>
    <property type="project" value="BHF-UCL"/>
</dbReference>
<dbReference type="GO" id="GO:1903598">
    <property type="term" value="P:positive regulation of gap junction assembly"/>
    <property type="evidence" value="ECO:0000316"/>
    <property type="project" value="BHF-UCL"/>
</dbReference>
<dbReference type="GO" id="GO:0050729">
    <property type="term" value="P:positive regulation of inflammatory response"/>
    <property type="evidence" value="ECO:0000314"/>
    <property type="project" value="BHF-UCL"/>
</dbReference>
<dbReference type="GO" id="GO:0010744">
    <property type="term" value="P:positive regulation of macrophage derived foam cell differentiation"/>
    <property type="evidence" value="ECO:0000314"/>
    <property type="project" value="BHF-UCL"/>
</dbReference>
<dbReference type="GO" id="GO:1902895">
    <property type="term" value="P:positive regulation of miRNA transcription"/>
    <property type="evidence" value="ECO:0000315"/>
    <property type="project" value="BHF-UCL"/>
</dbReference>
<dbReference type="GO" id="GO:0051897">
    <property type="term" value="P:positive regulation of phosphatidylinositol 3-kinase/protein kinase B signal transduction"/>
    <property type="evidence" value="ECO:0000314"/>
    <property type="project" value="BHF-UCL"/>
</dbReference>
<dbReference type="GO" id="GO:2000379">
    <property type="term" value="P:positive regulation of reactive oxygen species metabolic process"/>
    <property type="evidence" value="ECO:0000314"/>
    <property type="project" value="BHF-UCL"/>
</dbReference>
<dbReference type="GO" id="GO:0042981">
    <property type="term" value="P:regulation of apoptotic process"/>
    <property type="evidence" value="ECO:0000318"/>
    <property type="project" value="GO_Central"/>
</dbReference>
<dbReference type="GO" id="GO:0008217">
    <property type="term" value="P:regulation of blood pressure"/>
    <property type="evidence" value="ECO:0000316"/>
    <property type="project" value="BHF-UCL"/>
</dbReference>
<dbReference type="GO" id="GO:0002016">
    <property type="term" value="P:regulation of blood volume by renin-angiotensin"/>
    <property type="evidence" value="ECO:0000303"/>
    <property type="project" value="BHF-UCL"/>
</dbReference>
<dbReference type="GO" id="GO:1903779">
    <property type="term" value="P:regulation of cardiac conduction"/>
    <property type="evidence" value="ECO:0000316"/>
    <property type="project" value="BHF-UCL"/>
</dbReference>
<dbReference type="GO" id="GO:0001558">
    <property type="term" value="P:regulation of cell growth"/>
    <property type="evidence" value="ECO:0000303"/>
    <property type="project" value="BHF-UCL"/>
</dbReference>
<dbReference type="GO" id="GO:0042127">
    <property type="term" value="P:regulation of cell population proliferation"/>
    <property type="evidence" value="ECO:0000303"/>
    <property type="project" value="BHF-UCL"/>
</dbReference>
<dbReference type="GO" id="GO:1901201">
    <property type="term" value="P:regulation of extracellular matrix assembly"/>
    <property type="evidence" value="ECO:0000316"/>
    <property type="project" value="BHF-UCL"/>
</dbReference>
<dbReference type="GO" id="GO:0002019">
    <property type="term" value="P:regulation of renal output by angiotensin"/>
    <property type="evidence" value="ECO:0000303"/>
    <property type="project" value="BHF-UCL"/>
</dbReference>
<dbReference type="GO" id="GO:0035813">
    <property type="term" value="P:regulation of renal sodium excretion"/>
    <property type="evidence" value="ECO:0000303"/>
    <property type="project" value="BHF-UCL"/>
</dbReference>
<dbReference type="GO" id="GO:0019229">
    <property type="term" value="P:regulation of vasoconstriction"/>
    <property type="evidence" value="ECO:0000303"/>
    <property type="project" value="BHF-UCL"/>
</dbReference>
<dbReference type="GO" id="GO:0003014">
    <property type="term" value="P:renal system process"/>
    <property type="evidence" value="ECO:0000314"/>
    <property type="project" value="UniProtKB"/>
</dbReference>
<dbReference type="GO" id="GO:0002018">
    <property type="term" value="P:renin-angiotensin regulation of aldosterone production"/>
    <property type="evidence" value="ECO:0000303"/>
    <property type="project" value="BHF-UCL"/>
</dbReference>
<dbReference type="GO" id="GO:1990776">
    <property type="term" value="P:response to angiotensin"/>
    <property type="evidence" value="ECO:0000314"/>
    <property type="project" value="BHF-UCL"/>
</dbReference>
<dbReference type="GO" id="GO:0014873">
    <property type="term" value="P:response to muscle activity involved in regulation of muscle adaptation"/>
    <property type="evidence" value="ECO:0000250"/>
    <property type="project" value="BHF-UCL"/>
</dbReference>
<dbReference type="GO" id="GO:0042310">
    <property type="term" value="P:vasoconstriction"/>
    <property type="evidence" value="ECO:0007669"/>
    <property type="project" value="UniProtKB-KW"/>
</dbReference>
<dbReference type="CDD" id="cd02054">
    <property type="entry name" value="serpinA8_AGT"/>
    <property type="match status" value="1"/>
</dbReference>
<dbReference type="FunFam" id="2.30.39.10:FF:000018">
    <property type="entry name" value="Angiotensinogen"/>
    <property type="match status" value="1"/>
</dbReference>
<dbReference type="Gene3D" id="2.30.39.10">
    <property type="entry name" value="Alpha-1-antitrypsin, domain 1"/>
    <property type="match status" value="1"/>
</dbReference>
<dbReference type="Gene3D" id="3.30.497.10">
    <property type="entry name" value="Antithrombin, subunit I, domain 2"/>
    <property type="match status" value="1"/>
</dbReference>
<dbReference type="InterPro" id="IPR000227">
    <property type="entry name" value="Angiotensinogen"/>
</dbReference>
<dbReference type="InterPro" id="IPR033834">
    <property type="entry name" value="Angiotensinogen_serpin_dom"/>
</dbReference>
<dbReference type="InterPro" id="IPR023795">
    <property type="entry name" value="Serpin_CS"/>
</dbReference>
<dbReference type="InterPro" id="IPR023796">
    <property type="entry name" value="Serpin_dom"/>
</dbReference>
<dbReference type="InterPro" id="IPR000215">
    <property type="entry name" value="Serpin_fam"/>
</dbReference>
<dbReference type="InterPro" id="IPR036186">
    <property type="entry name" value="Serpin_sf"/>
</dbReference>
<dbReference type="InterPro" id="IPR042178">
    <property type="entry name" value="Serpin_sf_1"/>
</dbReference>
<dbReference type="InterPro" id="IPR042185">
    <property type="entry name" value="Serpin_sf_2"/>
</dbReference>
<dbReference type="PANTHER" id="PTHR11461:SF13">
    <property type="entry name" value="ANGIOTENSINOGEN"/>
    <property type="match status" value="1"/>
</dbReference>
<dbReference type="PANTHER" id="PTHR11461">
    <property type="entry name" value="SERINE PROTEASE INHIBITOR, SERPIN"/>
    <property type="match status" value="1"/>
</dbReference>
<dbReference type="Pfam" id="PF00079">
    <property type="entry name" value="Serpin"/>
    <property type="match status" value="1"/>
</dbReference>
<dbReference type="PRINTS" id="PR00654">
    <property type="entry name" value="ANGIOTENSNGN"/>
</dbReference>
<dbReference type="SMART" id="SM00093">
    <property type="entry name" value="SERPIN"/>
    <property type="match status" value="1"/>
</dbReference>
<dbReference type="SUPFAM" id="SSF56574">
    <property type="entry name" value="Serpins"/>
    <property type="match status" value="1"/>
</dbReference>
<dbReference type="PROSITE" id="PS00284">
    <property type="entry name" value="SERPIN"/>
    <property type="match status" value="1"/>
</dbReference>
<name>ANGT_HUMAN</name>
<evidence type="ECO:0000250" key="1">
    <source>
        <dbReference type="UniProtKB" id="P01015"/>
    </source>
</evidence>
<evidence type="ECO:0000250" key="2">
    <source>
        <dbReference type="UniProtKB" id="P11859"/>
    </source>
</evidence>
<evidence type="ECO:0000269" key="3">
    <source>
    </source>
</evidence>
<evidence type="ECO:0000269" key="4">
    <source>
    </source>
</evidence>
<evidence type="ECO:0000269" key="5">
    <source>
    </source>
</evidence>
<evidence type="ECO:0000269" key="6">
    <source>
    </source>
</evidence>
<evidence type="ECO:0000269" key="7">
    <source>
    </source>
</evidence>
<evidence type="ECO:0000269" key="8">
    <source>
    </source>
</evidence>
<evidence type="ECO:0000269" key="9">
    <source>
    </source>
</evidence>
<evidence type="ECO:0000269" key="10">
    <source>
    </source>
</evidence>
<evidence type="ECO:0000269" key="11">
    <source>
    </source>
</evidence>
<evidence type="ECO:0000269" key="12">
    <source>
    </source>
</evidence>
<evidence type="ECO:0000269" key="13">
    <source>
    </source>
</evidence>
<evidence type="ECO:0000269" key="14">
    <source>
    </source>
</evidence>
<evidence type="ECO:0000269" key="15">
    <source>
    </source>
</evidence>
<evidence type="ECO:0000269" key="16">
    <source>
    </source>
</evidence>
<evidence type="ECO:0000269" key="17">
    <source>
    </source>
</evidence>
<evidence type="ECO:0000269" key="18">
    <source>
    </source>
</evidence>
<evidence type="ECO:0000269" key="19">
    <source>
    </source>
</evidence>
<evidence type="ECO:0000269" key="20">
    <source>
    </source>
</evidence>
<evidence type="ECO:0000269" key="21">
    <source>
    </source>
</evidence>
<evidence type="ECO:0000269" key="22">
    <source>
    </source>
</evidence>
<evidence type="ECO:0000269" key="23">
    <source>
    </source>
</evidence>
<evidence type="ECO:0000269" key="24">
    <source>
    </source>
</evidence>
<evidence type="ECO:0000269" key="25">
    <source>
    </source>
</evidence>
<evidence type="ECO:0000269" key="26">
    <source>
    </source>
</evidence>
<evidence type="ECO:0000305" key="27"/>
<evidence type="ECO:0000305" key="28">
    <source>
    </source>
</evidence>
<evidence type="ECO:0000305" key="29">
    <source>
    </source>
</evidence>
<evidence type="ECO:0000305" key="30">
    <source>
    </source>
</evidence>
<evidence type="ECO:0000305" key="31">
    <source>
    </source>
</evidence>
<evidence type="ECO:0000305" key="32">
    <source>
    </source>
</evidence>
<evidence type="ECO:0000305" key="33">
    <source>
    </source>
</evidence>
<evidence type="ECO:0000305" key="34">
    <source>
    </source>
</evidence>
<evidence type="ECO:0000305" key="35">
    <source>
    </source>
</evidence>
<evidence type="ECO:0000312" key="36">
    <source>
        <dbReference type="HGNC" id="HGNC:333"/>
    </source>
</evidence>
<evidence type="ECO:0007744" key="37">
    <source>
        <dbReference type="PDB" id="1N9U"/>
    </source>
</evidence>
<evidence type="ECO:0007744" key="38">
    <source>
        <dbReference type="PDB" id="1N9V"/>
    </source>
</evidence>
<evidence type="ECO:0007744" key="39">
    <source>
        <dbReference type="PDB" id="2WXW"/>
    </source>
</evidence>
<evidence type="ECO:0007744" key="40">
    <source>
        <dbReference type="PDB" id="2X0B"/>
    </source>
</evidence>
<evidence type="ECO:0007829" key="41">
    <source>
        <dbReference type="PDB" id="2WXW"/>
    </source>
</evidence>
<evidence type="ECO:0007829" key="42">
    <source>
        <dbReference type="PDB" id="5M3Y"/>
    </source>
</evidence>
<evidence type="ECO:0007829" key="43">
    <source>
        <dbReference type="PDB" id="6I3F"/>
    </source>
</evidence>
<evidence type="ECO:0007829" key="44">
    <source>
        <dbReference type="PDB" id="6I3I"/>
    </source>
</evidence>
<evidence type="ECO:0007829" key="45">
    <source>
        <dbReference type="PDB" id="6OS0"/>
    </source>
</evidence>
<keyword id="KW-0002">3D-structure</keyword>
<keyword id="KW-0903">Direct protein sequencing</keyword>
<keyword id="KW-0225">Disease variant</keyword>
<keyword id="KW-1015">Disulfide bond</keyword>
<keyword id="KW-0325">Glycoprotein</keyword>
<keyword id="KW-1267">Proteomics identification</keyword>
<keyword id="KW-1185">Reference proteome</keyword>
<keyword id="KW-0964">Secreted</keyword>
<keyword id="KW-0732">Signal</keyword>
<keyword id="KW-0838">Vasoactive</keyword>
<keyword id="KW-0839">Vasoconstrictor</keyword>
<protein>
    <recommendedName>
        <fullName evidence="27">Angiotensinogen</fullName>
    </recommendedName>
    <alternativeName>
        <fullName>Serpin A8</fullName>
    </alternativeName>
    <component>
        <recommendedName>
            <fullName>Angiotensin-1</fullName>
        </recommendedName>
        <alternativeName>
            <fullName>Angiotensin 1-10</fullName>
        </alternativeName>
        <alternativeName>
            <fullName>Angiotensin I</fullName>
            <shortName>Ang I</shortName>
        </alternativeName>
    </component>
    <component>
        <recommendedName>
            <fullName>Angiotensin-2</fullName>
        </recommendedName>
        <alternativeName>
            <fullName>Angiotensin 1-8</fullName>
        </alternativeName>
        <alternativeName>
            <fullName>Angiotensin II</fullName>
            <shortName>Ang II</shortName>
        </alternativeName>
    </component>
    <component>
        <recommendedName>
            <fullName>Angiotensin-3</fullName>
        </recommendedName>
        <alternativeName>
            <fullName>Angiotensin 2-8</fullName>
        </alternativeName>
        <alternativeName>
            <fullName>Angiotensin III</fullName>
            <shortName>Ang III</shortName>
        </alternativeName>
        <alternativeName>
            <fullName>Des-Asp[1]-angiotensin II</fullName>
        </alternativeName>
    </component>
    <component>
        <recommendedName>
            <fullName>Angiotensin-4</fullName>
        </recommendedName>
        <alternativeName>
            <fullName>Angiotensin 3-8</fullName>
        </alternativeName>
        <alternativeName>
            <fullName>Angiotensin IV</fullName>
            <shortName>Ang IV</shortName>
        </alternativeName>
    </component>
    <component>
        <recommendedName>
            <fullName>Angiotensin 1-9</fullName>
        </recommendedName>
    </component>
    <component>
        <recommendedName>
            <fullName>Angiotensin 1-7</fullName>
        </recommendedName>
    </component>
    <component>
        <recommendedName>
            <fullName>Angiotensin 1-5</fullName>
        </recommendedName>
    </component>
    <component>
        <recommendedName>
            <fullName>Angiotensin 1-4</fullName>
        </recommendedName>
    </component>
</protein>